<reference key="1">
    <citation type="journal article" date="1992" name="Plant Mol. Biol.">
        <title>Three genes encode 3-hydroxy-3-methylglutaryl-coenzyme A reductase in Hevea brasiliensis: hmg1 and hmg3 are differentially expressed.</title>
        <authorList>
            <person name="Chye M.L."/>
            <person name="Tan C.T."/>
            <person name="Chua N.H."/>
        </authorList>
    </citation>
    <scope>NUCLEOTIDE SEQUENCE [GENOMIC DNA / MRNA]</scope>
</reference>
<organism>
    <name type="scientific">Hevea brasiliensis</name>
    <name type="common">Para rubber tree</name>
    <name type="synonym">Siphonia brasiliensis</name>
    <dbReference type="NCBI Taxonomy" id="3981"/>
    <lineage>
        <taxon>Eukaryota</taxon>
        <taxon>Viridiplantae</taxon>
        <taxon>Streptophyta</taxon>
        <taxon>Embryophyta</taxon>
        <taxon>Tracheophyta</taxon>
        <taxon>Spermatophyta</taxon>
        <taxon>Magnoliopsida</taxon>
        <taxon>eudicotyledons</taxon>
        <taxon>Gunneridae</taxon>
        <taxon>Pentapetalae</taxon>
        <taxon>rosids</taxon>
        <taxon>fabids</taxon>
        <taxon>Malpighiales</taxon>
        <taxon>Euphorbiaceae</taxon>
        <taxon>Crotonoideae</taxon>
        <taxon>Micrandreae</taxon>
        <taxon>Hevea</taxon>
    </lineage>
</organism>
<name>HMDH3_HEVBR</name>
<feature type="chain" id="PRO_0000114442" description="3-hydroxy-3-methylglutaryl-coenzyme A reductase 3">
    <location>
        <begin position="1"/>
        <end position="586"/>
    </location>
</feature>
<feature type="transmembrane region" description="Helical" evidence="1">
    <location>
        <begin position="36"/>
        <end position="59"/>
    </location>
</feature>
<feature type="transmembrane region" description="Helical" evidence="1">
    <location>
        <begin position="87"/>
        <end position="107"/>
    </location>
</feature>
<feature type="region of interest" description="Linker" evidence="1">
    <location>
        <begin position="108"/>
        <end position="170"/>
    </location>
</feature>
<feature type="region of interest" description="Catalytic" evidence="1">
    <location>
        <begin position="171"/>
        <end position="586"/>
    </location>
</feature>
<feature type="region of interest" description="Catalytic" evidence="1">
    <location>
        <begin position="172"/>
        <end position="586"/>
    </location>
</feature>
<feature type="active site" description="Charge relay system" evidence="1">
    <location>
        <position position="265"/>
    </location>
</feature>
<feature type="active site" description="Charge relay system" evidence="1">
    <location>
        <position position="397"/>
    </location>
</feature>
<feature type="active site" description="Charge relay system" evidence="1">
    <location>
        <position position="473"/>
    </location>
</feature>
<feature type="active site" description="Proton donor" evidence="3">
    <location>
        <position position="571"/>
    </location>
</feature>
<feature type="glycosylation site" description="N-linked (GlcNAc...) asparagine" evidence="2">
    <location>
        <position position="575"/>
    </location>
</feature>
<protein>
    <recommendedName>
        <fullName>3-hydroxy-3-methylglutaryl-coenzyme A reductase 3</fullName>
        <shortName>HMG-CoA reductase 3</shortName>
        <ecNumber>1.1.1.34</ecNumber>
    </recommendedName>
</protein>
<keyword id="KW-0256">Endoplasmic reticulum</keyword>
<keyword id="KW-0325">Glycoprotein</keyword>
<keyword id="KW-0414">Isoprene biosynthesis</keyword>
<keyword id="KW-0472">Membrane</keyword>
<keyword id="KW-0496">Mitochondrion</keyword>
<keyword id="KW-0521">NADP</keyword>
<keyword id="KW-0560">Oxidoreductase</keyword>
<keyword id="KW-0934">Plastid</keyword>
<keyword id="KW-0812">Transmembrane</keyword>
<keyword id="KW-1133">Transmembrane helix</keyword>
<gene>
    <name type="primary">HMGR3</name>
</gene>
<accession>Q00583</accession>
<comment type="function">
    <text>Catalyzes the synthesis of mevalonate. The specific precursor of all isoprenoid compounds present in plants.</text>
</comment>
<comment type="catalytic activity">
    <reaction evidence="3">
        <text>(R)-mevalonate + 2 NADP(+) + CoA = (3S)-3-hydroxy-3-methylglutaryl-CoA + 2 NADPH + 2 H(+)</text>
        <dbReference type="Rhea" id="RHEA:15989"/>
        <dbReference type="ChEBI" id="CHEBI:15378"/>
        <dbReference type="ChEBI" id="CHEBI:36464"/>
        <dbReference type="ChEBI" id="CHEBI:43074"/>
        <dbReference type="ChEBI" id="CHEBI:57287"/>
        <dbReference type="ChEBI" id="CHEBI:57783"/>
        <dbReference type="ChEBI" id="CHEBI:58349"/>
        <dbReference type="EC" id="1.1.1.34"/>
    </reaction>
</comment>
<comment type="pathway">
    <text>Metabolic intermediate biosynthesis; (R)-mevalonate biosynthesis; (R)-mevalonate from acetyl-CoA: step 3/3.</text>
</comment>
<comment type="subcellular location">
    <subcellularLocation>
        <location>Endoplasmic reticulum membrane</location>
        <topology>Multi-pass membrane protein</topology>
    </subcellularLocation>
    <subcellularLocation>
        <location>Mitochondrion membrane</location>
        <topology>Multi-pass membrane protein</topology>
    </subcellularLocation>
    <subcellularLocation>
        <location>Plastid membrane</location>
        <topology>Multi-pass membrane protein</topology>
    </subcellularLocation>
</comment>
<comment type="similarity">
    <text evidence="4">Belongs to the HMG-CoA reductase family.</text>
</comment>
<dbReference type="EC" id="1.1.1.34"/>
<dbReference type="EMBL" id="M74800">
    <property type="protein sequence ID" value="AAA33360.1"/>
    <property type="molecule type" value="mRNA"/>
</dbReference>
<dbReference type="EMBL" id="M74798">
    <property type="protein sequence ID" value="AAA33358.1"/>
    <property type="molecule type" value="Genomic_DNA"/>
</dbReference>
<dbReference type="EMBL" id="M74799">
    <property type="protein sequence ID" value="AAA33359.1"/>
    <property type="molecule type" value="Genomic_DNA"/>
</dbReference>
<dbReference type="PIR" id="S22521">
    <property type="entry name" value="S22521"/>
</dbReference>
<dbReference type="SMR" id="Q00583"/>
<dbReference type="GlyCosmos" id="Q00583">
    <property type="glycosylation" value="1 site, No reported glycans"/>
</dbReference>
<dbReference type="UniPathway" id="UPA00058">
    <property type="reaction ID" value="UER00103"/>
</dbReference>
<dbReference type="GO" id="GO:0005789">
    <property type="term" value="C:endoplasmic reticulum membrane"/>
    <property type="evidence" value="ECO:0007669"/>
    <property type="project" value="UniProtKB-SubCell"/>
</dbReference>
<dbReference type="GO" id="GO:0031966">
    <property type="term" value="C:mitochondrial membrane"/>
    <property type="evidence" value="ECO:0007669"/>
    <property type="project" value="UniProtKB-SubCell"/>
</dbReference>
<dbReference type="GO" id="GO:0005778">
    <property type="term" value="C:peroxisomal membrane"/>
    <property type="evidence" value="ECO:0007669"/>
    <property type="project" value="TreeGrafter"/>
</dbReference>
<dbReference type="GO" id="GO:0042170">
    <property type="term" value="C:plastid membrane"/>
    <property type="evidence" value="ECO:0007669"/>
    <property type="project" value="UniProtKB-SubCell"/>
</dbReference>
<dbReference type="GO" id="GO:0004420">
    <property type="term" value="F:hydroxymethylglutaryl-CoA reductase (NADPH) activity"/>
    <property type="evidence" value="ECO:0007669"/>
    <property type="project" value="UniProtKB-EC"/>
</dbReference>
<dbReference type="GO" id="GO:0015936">
    <property type="term" value="P:coenzyme A metabolic process"/>
    <property type="evidence" value="ECO:0007669"/>
    <property type="project" value="InterPro"/>
</dbReference>
<dbReference type="GO" id="GO:0008299">
    <property type="term" value="P:isoprenoid biosynthetic process"/>
    <property type="evidence" value="ECO:0007669"/>
    <property type="project" value="UniProtKB-KW"/>
</dbReference>
<dbReference type="GO" id="GO:0016126">
    <property type="term" value="P:sterol biosynthetic process"/>
    <property type="evidence" value="ECO:0007669"/>
    <property type="project" value="TreeGrafter"/>
</dbReference>
<dbReference type="CDD" id="cd00643">
    <property type="entry name" value="HMG-CoA_reductase_classI"/>
    <property type="match status" value="1"/>
</dbReference>
<dbReference type="FunFam" id="1.10.3270.10:FF:000002">
    <property type="entry name" value="3-hydroxy-3-methylglutaryl coenzyme A reductase"/>
    <property type="match status" value="1"/>
</dbReference>
<dbReference type="FunFam" id="3.30.70.420:FF:000001">
    <property type="entry name" value="3-hydroxy-3-methylglutaryl coenzyme A reductase"/>
    <property type="match status" value="1"/>
</dbReference>
<dbReference type="FunFam" id="3.90.770.10:FF:000001">
    <property type="entry name" value="3-hydroxy-3-methylglutaryl coenzyme A reductase"/>
    <property type="match status" value="1"/>
</dbReference>
<dbReference type="Gene3D" id="3.90.770.10">
    <property type="entry name" value="3-hydroxy-3-methylglutaryl-coenzyme A Reductase, Chain A, domain 2"/>
    <property type="match status" value="1"/>
</dbReference>
<dbReference type="Gene3D" id="1.10.3270.10">
    <property type="entry name" value="HMGR, N-terminal domain"/>
    <property type="match status" value="1"/>
</dbReference>
<dbReference type="Gene3D" id="3.30.70.420">
    <property type="entry name" value="Hydroxymethylglutaryl-CoA reductase, class I/II, NAD/NADP-binding domain"/>
    <property type="match status" value="1"/>
</dbReference>
<dbReference type="InterPro" id="IPR002202">
    <property type="entry name" value="HMG_CoA_Rdtase"/>
</dbReference>
<dbReference type="InterPro" id="IPR023074">
    <property type="entry name" value="HMG_CoA_Rdtase_cat_sf"/>
</dbReference>
<dbReference type="InterPro" id="IPR023076">
    <property type="entry name" value="HMG_CoA_Rdtase_CS"/>
</dbReference>
<dbReference type="InterPro" id="IPR004554">
    <property type="entry name" value="HMG_CoA_Rdtase_eu_arc"/>
</dbReference>
<dbReference type="InterPro" id="IPR023282">
    <property type="entry name" value="HMG_CoA_Rdtase_N"/>
</dbReference>
<dbReference type="InterPro" id="IPR009023">
    <property type="entry name" value="HMG_CoA_Rdtase_NAD(P)-bd_sf"/>
</dbReference>
<dbReference type="InterPro" id="IPR009029">
    <property type="entry name" value="HMG_CoA_Rdtase_sub-bd_dom_sf"/>
</dbReference>
<dbReference type="NCBIfam" id="TIGR00533">
    <property type="entry name" value="HMG_CoA_R_NADP"/>
    <property type="match status" value="1"/>
</dbReference>
<dbReference type="PANTHER" id="PTHR10572">
    <property type="entry name" value="3-HYDROXY-3-METHYLGLUTARYL-COENZYME A REDUCTASE"/>
    <property type="match status" value="1"/>
</dbReference>
<dbReference type="PANTHER" id="PTHR10572:SF56">
    <property type="entry name" value="3-HYDROXY-3-METHYLGLUTARYL-COENZYME A REDUCTASE 1"/>
    <property type="match status" value="1"/>
</dbReference>
<dbReference type="Pfam" id="PF00368">
    <property type="entry name" value="HMG-CoA_red"/>
    <property type="match status" value="1"/>
</dbReference>
<dbReference type="PRINTS" id="PR00071">
    <property type="entry name" value="HMGCOARDTASE"/>
</dbReference>
<dbReference type="SUPFAM" id="SSF55035">
    <property type="entry name" value="NAD-binding domain of HMG-CoA reductase"/>
    <property type="match status" value="1"/>
</dbReference>
<dbReference type="SUPFAM" id="SSF56542">
    <property type="entry name" value="Substrate-binding domain of HMG-CoA reductase"/>
    <property type="match status" value="1"/>
</dbReference>
<dbReference type="PROSITE" id="PS00066">
    <property type="entry name" value="HMG_COA_REDUCTASE_1"/>
    <property type="match status" value="1"/>
</dbReference>
<dbReference type="PROSITE" id="PS00318">
    <property type="entry name" value="HMG_COA_REDUCTASE_2"/>
    <property type="match status" value="1"/>
</dbReference>
<dbReference type="PROSITE" id="PS01192">
    <property type="entry name" value="HMG_COA_REDUCTASE_3"/>
    <property type="match status" value="1"/>
</dbReference>
<dbReference type="PROSITE" id="PS50065">
    <property type="entry name" value="HMG_COA_REDUCTASE_4"/>
    <property type="match status" value="1"/>
</dbReference>
<evidence type="ECO:0000250" key="1"/>
<evidence type="ECO:0000255" key="2"/>
<evidence type="ECO:0000255" key="3">
    <source>
        <dbReference type="PROSITE-ProRule" id="PRU10003"/>
    </source>
</evidence>
<evidence type="ECO:0000305" key="4"/>
<proteinExistence type="evidence at transcript level"/>
<sequence>MDEVRRRPPKHIVRKDHDGEVLNSFSHGHHLPPLKPSDYSLPLSLYLANALVFSLFFSVAYFLLHRWREKIRKSTPLHIVTFPEIAALICLVASVIYLLGFFGIGFVHSFSRASTDSWDVEEYDDDNIIIKEDTRPTGACAAPSLDCSLSLPTKIHAPIVSTTTTSTLSDDDEQIIKSVVSGSIPSYSLESKLGNCKRAALIRRETLQRMSGRSLEGLPLDGFDYESILGQCCEMAIGYVQIPVGIAGPLLLDGKEYTVPMATTEGCLVASANRGCKAIYASGGATSVLLRDGMTRAPVVRFPTAKRAADLKFFMEDPDNFDTIAVVFNKSSRFARLQSVQCAIAGKNLYMRFSCSTGDAMGMNMVSKAVQNVIDYLQNDFPDMDVIGLTGNFCADKKAAAVNWIEGRGKSVVCEAIIKEEVVKKVLKTNVAALVELNMIKNLTGSAVAGSLGGFNAHASNMVTAVYIATGQDPAQNVESSHCITMMEAVNDGKDLHISVSMPSIELGTVGGGTQLASQSACLNLLGVKGASKDSPGSNSRLLATIVAGSVLAGELSLMSAIAAGQLVNSHMKYNRSAKDVSKITF</sequence>